<comment type="function">
    <text evidence="1">Involved in peptide bond synthesis. Stimulates efficient translation and peptide-bond synthesis on native or reconstituted 70S ribosomes in vitro. Probably functions indirectly by altering the affinity of the ribosome for aminoacyl-tRNA, thus increasing their reactivity as acceptors for peptidyl transferase.</text>
</comment>
<comment type="pathway">
    <text evidence="1">Protein biosynthesis; polypeptide chain elongation.</text>
</comment>
<comment type="subcellular location">
    <subcellularLocation>
        <location evidence="1">Cytoplasm</location>
    </subcellularLocation>
</comment>
<comment type="similarity">
    <text evidence="1">Belongs to the elongation factor P family.</text>
</comment>
<reference key="1">
    <citation type="submission" date="2007-04" db="EMBL/GenBank/DDBJ databases">
        <title>Complete sequence of Roseiflexus sp. RS-1.</title>
        <authorList>
            <consortium name="US DOE Joint Genome Institute"/>
            <person name="Copeland A."/>
            <person name="Lucas S."/>
            <person name="Lapidus A."/>
            <person name="Barry K."/>
            <person name="Detter J.C."/>
            <person name="Glavina del Rio T."/>
            <person name="Hammon N."/>
            <person name="Israni S."/>
            <person name="Dalin E."/>
            <person name="Tice H."/>
            <person name="Pitluck S."/>
            <person name="Chertkov O."/>
            <person name="Brettin T."/>
            <person name="Bruce D."/>
            <person name="Han C."/>
            <person name="Schmutz J."/>
            <person name="Larimer F."/>
            <person name="Land M."/>
            <person name="Hauser L."/>
            <person name="Kyrpides N."/>
            <person name="Mikhailova N."/>
            <person name="Bryant D.A."/>
            <person name="Richardson P."/>
        </authorList>
    </citation>
    <scope>NUCLEOTIDE SEQUENCE [LARGE SCALE GENOMIC DNA]</scope>
    <source>
        <strain>RS-1</strain>
    </source>
</reference>
<accession>A5UYR6</accession>
<organism>
    <name type="scientific">Roseiflexus sp. (strain RS-1)</name>
    <dbReference type="NCBI Taxonomy" id="357808"/>
    <lineage>
        <taxon>Bacteria</taxon>
        <taxon>Bacillati</taxon>
        <taxon>Chloroflexota</taxon>
        <taxon>Chloroflexia</taxon>
        <taxon>Chloroflexales</taxon>
        <taxon>Roseiflexineae</taxon>
        <taxon>Roseiflexaceae</taxon>
        <taxon>Roseiflexus</taxon>
    </lineage>
</organism>
<gene>
    <name evidence="1" type="primary">efp</name>
    <name type="ordered locus">RoseRS_3411</name>
</gene>
<proteinExistence type="inferred from homology"/>
<evidence type="ECO:0000255" key="1">
    <source>
        <dbReference type="HAMAP-Rule" id="MF_00141"/>
    </source>
</evidence>
<keyword id="KW-0963">Cytoplasm</keyword>
<keyword id="KW-0251">Elongation factor</keyword>
<keyword id="KW-0648">Protein biosynthesis</keyword>
<name>EFP_ROSS1</name>
<sequence>MATTSDLRTNMIIRYNGQLHRVVEFYHHAPGNWRAMVIMKLKNLETGKTIEERVRAGSEIEIVRVEKRPMQFLYRDGDVYHFMDTETFEQIEVPEEMIGEPAKFLKENEMADILFYDDNKILGVEPPLFVTLQVTEASVAVRGDTATNVNKQVTLETGAVISVPAFVNQGDYVRVDTRTGEYIERIK</sequence>
<protein>
    <recommendedName>
        <fullName evidence="1">Elongation factor P</fullName>
        <shortName evidence="1">EF-P</shortName>
    </recommendedName>
</protein>
<dbReference type="EMBL" id="CP000686">
    <property type="protein sequence ID" value="ABQ91769.1"/>
    <property type="molecule type" value="Genomic_DNA"/>
</dbReference>
<dbReference type="RefSeq" id="WP_011958111.1">
    <property type="nucleotide sequence ID" value="NC_009523.1"/>
</dbReference>
<dbReference type="SMR" id="A5UYR6"/>
<dbReference type="STRING" id="357808.RoseRS_3411"/>
<dbReference type="KEGG" id="rrs:RoseRS_3411"/>
<dbReference type="eggNOG" id="COG0231">
    <property type="taxonomic scope" value="Bacteria"/>
</dbReference>
<dbReference type="HOGENOM" id="CLU_074944_0_1_0"/>
<dbReference type="OrthoDB" id="9801844at2"/>
<dbReference type="UniPathway" id="UPA00345"/>
<dbReference type="Proteomes" id="UP000006554">
    <property type="component" value="Chromosome"/>
</dbReference>
<dbReference type="GO" id="GO:0005737">
    <property type="term" value="C:cytoplasm"/>
    <property type="evidence" value="ECO:0007669"/>
    <property type="project" value="UniProtKB-SubCell"/>
</dbReference>
<dbReference type="GO" id="GO:0003746">
    <property type="term" value="F:translation elongation factor activity"/>
    <property type="evidence" value="ECO:0007669"/>
    <property type="project" value="UniProtKB-UniRule"/>
</dbReference>
<dbReference type="GO" id="GO:0043043">
    <property type="term" value="P:peptide biosynthetic process"/>
    <property type="evidence" value="ECO:0007669"/>
    <property type="project" value="InterPro"/>
</dbReference>
<dbReference type="CDD" id="cd04470">
    <property type="entry name" value="S1_EF-P_repeat_1"/>
    <property type="match status" value="1"/>
</dbReference>
<dbReference type="CDD" id="cd05794">
    <property type="entry name" value="S1_EF-P_repeat_2"/>
    <property type="match status" value="1"/>
</dbReference>
<dbReference type="FunFam" id="2.30.30.30:FF:000003">
    <property type="entry name" value="Elongation factor P"/>
    <property type="match status" value="1"/>
</dbReference>
<dbReference type="FunFam" id="2.40.50.140:FF:000004">
    <property type="entry name" value="Elongation factor P"/>
    <property type="match status" value="1"/>
</dbReference>
<dbReference type="FunFam" id="2.40.50.140:FF:000009">
    <property type="entry name" value="Elongation factor P"/>
    <property type="match status" value="1"/>
</dbReference>
<dbReference type="Gene3D" id="2.30.30.30">
    <property type="match status" value="1"/>
</dbReference>
<dbReference type="Gene3D" id="2.40.50.140">
    <property type="entry name" value="Nucleic acid-binding proteins"/>
    <property type="match status" value="2"/>
</dbReference>
<dbReference type="HAMAP" id="MF_00141">
    <property type="entry name" value="EF_P"/>
    <property type="match status" value="1"/>
</dbReference>
<dbReference type="InterPro" id="IPR015365">
    <property type="entry name" value="Elong-fact-P_C"/>
</dbReference>
<dbReference type="InterPro" id="IPR012340">
    <property type="entry name" value="NA-bd_OB-fold"/>
</dbReference>
<dbReference type="InterPro" id="IPR014722">
    <property type="entry name" value="Rib_uL2_dom2"/>
</dbReference>
<dbReference type="InterPro" id="IPR020599">
    <property type="entry name" value="Transl_elong_fac_P/YeiP"/>
</dbReference>
<dbReference type="InterPro" id="IPR013185">
    <property type="entry name" value="Transl_elong_KOW-like"/>
</dbReference>
<dbReference type="InterPro" id="IPR001059">
    <property type="entry name" value="Transl_elong_P/YeiP_cen"/>
</dbReference>
<dbReference type="InterPro" id="IPR013852">
    <property type="entry name" value="Transl_elong_P/YeiP_CS"/>
</dbReference>
<dbReference type="InterPro" id="IPR011768">
    <property type="entry name" value="Transl_elongation_fac_P"/>
</dbReference>
<dbReference type="InterPro" id="IPR008991">
    <property type="entry name" value="Translation_prot_SH3-like_sf"/>
</dbReference>
<dbReference type="NCBIfam" id="TIGR00038">
    <property type="entry name" value="efp"/>
    <property type="match status" value="1"/>
</dbReference>
<dbReference type="NCBIfam" id="NF001810">
    <property type="entry name" value="PRK00529.1"/>
    <property type="match status" value="1"/>
</dbReference>
<dbReference type="PANTHER" id="PTHR30053">
    <property type="entry name" value="ELONGATION FACTOR P"/>
    <property type="match status" value="1"/>
</dbReference>
<dbReference type="PANTHER" id="PTHR30053:SF12">
    <property type="entry name" value="ELONGATION FACTOR P (EF-P) FAMILY PROTEIN"/>
    <property type="match status" value="1"/>
</dbReference>
<dbReference type="Pfam" id="PF01132">
    <property type="entry name" value="EFP"/>
    <property type="match status" value="1"/>
</dbReference>
<dbReference type="Pfam" id="PF08207">
    <property type="entry name" value="EFP_N"/>
    <property type="match status" value="1"/>
</dbReference>
<dbReference type="Pfam" id="PF09285">
    <property type="entry name" value="Elong-fact-P_C"/>
    <property type="match status" value="1"/>
</dbReference>
<dbReference type="PIRSF" id="PIRSF005901">
    <property type="entry name" value="EF-P"/>
    <property type="match status" value="1"/>
</dbReference>
<dbReference type="SMART" id="SM01185">
    <property type="entry name" value="EFP"/>
    <property type="match status" value="1"/>
</dbReference>
<dbReference type="SMART" id="SM00841">
    <property type="entry name" value="Elong-fact-P_C"/>
    <property type="match status" value="1"/>
</dbReference>
<dbReference type="SUPFAM" id="SSF50249">
    <property type="entry name" value="Nucleic acid-binding proteins"/>
    <property type="match status" value="2"/>
</dbReference>
<dbReference type="SUPFAM" id="SSF50104">
    <property type="entry name" value="Translation proteins SH3-like domain"/>
    <property type="match status" value="1"/>
</dbReference>
<dbReference type="PROSITE" id="PS01275">
    <property type="entry name" value="EFP"/>
    <property type="match status" value="1"/>
</dbReference>
<feature type="chain" id="PRO_1000010839" description="Elongation factor P">
    <location>
        <begin position="1"/>
        <end position="187"/>
    </location>
</feature>